<protein>
    <recommendedName>
        <fullName>Beta-lactamase</fullName>
        <ecNumber>3.5.2.6</ecNumber>
    </recommendedName>
    <alternativeName>
        <fullName>Cephalosporinase</fullName>
    </alternativeName>
</protein>
<dbReference type="EC" id="3.5.2.6"/>
<dbReference type="EMBL" id="X56660">
    <property type="protein sequence ID" value="CAA39987.1"/>
    <property type="molecule type" value="Genomic_DNA"/>
</dbReference>
<dbReference type="PIR" id="S54103">
    <property type="entry name" value="S54103"/>
</dbReference>
<dbReference type="SMR" id="Q48743"/>
<dbReference type="MEROPS" id="S12.006"/>
<dbReference type="GO" id="GO:0030288">
    <property type="term" value="C:outer membrane-bounded periplasmic space"/>
    <property type="evidence" value="ECO:0007669"/>
    <property type="project" value="InterPro"/>
</dbReference>
<dbReference type="GO" id="GO:0008800">
    <property type="term" value="F:beta-lactamase activity"/>
    <property type="evidence" value="ECO:0007669"/>
    <property type="project" value="UniProtKB-EC"/>
</dbReference>
<dbReference type="GO" id="GO:0017001">
    <property type="term" value="P:antibiotic catabolic process"/>
    <property type="evidence" value="ECO:0007669"/>
    <property type="project" value="InterPro"/>
</dbReference>
<dbReference type="GO" id="GO:0046677">
    <property type="term" value="P:response to antibiotic"/>
    <property type="evidence" value="ECO:0007669"/>
    <property type="project" value="UniProtKB-KW"/>
</dbReference>
<dbReference type="Gene3D" id="3.40.710.10">
    <property type="entry name" value="DD-peptidase/beta-lactamase superfamily"/>
    <property type="match status" value="1"/>
</dbReference>
<dbReference type="InterPro" id="IPR050491">
    <property type="entry name" value="Bact_CellWall_Synth/Modif"/>
</dbReference>
<dbReference type="InterPro" id="IPR001466">
    <property type="entry name" value="Beta-lactam-related"/>
</dbReference>
<dbReference type="InterPro" id="IPR012338">
    <property type="entry name" value="Beta-lactam/transpept-like"/>
</dbReference>
<dbReference type="InterPro" id="IPR001586">
    <property type="entry name" value="Beta-lactam_class-C_AS"/>
</dbReference>
<dbReference type="NCBIfam" id="NF033085">
    <property type="entry name" value="bla_class_C"/>
    <property type="match status" value="1"/>
</dbReference>
<dbReference type="PANTHER" id="PTHR46825:SF8">
    <property type="entry name" value="BETA-LACTAMASE-RELATED"/>
    <property type="match status" value="1"/>
</dbReference>
<dbReference type="PANTHER" id="PTHR46825">
    <property type="entry name" value="D-ALANYL-D-ALANINE-CARBOXYPEPTIDASE/ENDOPEPTIDASE AMPH"/>
    <property type="match status" value="1"/>
</dbReference>
<dbReference type="Pfam" id="PF00144">
    <property type="entry name" value="Beta-lactamase"/>
    <property type="match status" value="1"/>
</dbReference>
<dbReference type="SUPFAM" id="SSF56601">
    <property type="entry name" value="beta-lactamase/transpeptidase-like"/>
    <property type="match status" value="1"/>
</dbReference>
<dbReference type="PROSITE" id="PS00336">
    <property type="entry name" value="BETA_LACTAMASE_C"/>
    <property type="match status" value="1"/>
</dbReference>
<sequence length="385" mass="41878">MKRLLAFCLLFFAALGQAKVPPPARSAADAEIQRAVAAFMQQYQVPGVAVGITVDGAERYYNYGVSSRKTQAKVGANTLFEVGSVSKTFTATLASYAQVNQQLSLADHPGKYLPEMKGHDFDKVTLLNLGTHTAGGFPMQVPTQVKTDQQLTAYFQSWHPQYPAGTKRTYANPGIGMLGVIAAKSMRMPFQKAMTGVLLPKLGLTNTYLTVPPAKMAFYAQGYDDKGQPVRMSPGALWEPTYGIKTTARDLLRFVEINLDQVKVEPKLKRAIDGTHVGYYRLGEMTQGLVWEQLPYPASETSLQANSSQKVIFESNAVAALTPPRPPQANVLINKTGSTRGFGAYVAFNPARKIGIVLLMNRSVPMDGRIKLAHTILDTAGGMAK</sequence>
<name>AMPC_LYSLA</name>
<accession>Q48743</accession>
<organism>
    <name type="scientific">Lysobacter lactamgenus</name>
    <dbReference type="NCBI Taxonomy" id="39596"/>
    <lineage>
        <taxon>Bacteria</taxon>
        <taxon>Pseudomonadati</taxon>
        <taxon>Pseudomonadota</taxon>
        <taxon>Gammaproteobacteria</taxon>
        <taxon>Lysobacterales</taxon>
        <taxon>Lysobacteraceae</taxon>
        <taxon>Lysobacter</taxon>
    </lineage>
</organism>
<comment type="function">
    <text>This protein is a serine beta-lactamase with a substrate specificity for cephalosporins.</text>
</comment>
<comment type="catalytic activity">
    <reaction evidence="2">
        <text>a beta-lactam + H2O = a substituted beta-amino acid</text>
        <dbReference type="Rhea" id="RHEA:20401"/>
        <dbReference type="ChEBI" id="CHEBI:15377"/>
        <dbReference type="ChEBI" id="CHEBI:35627"/>
        <dbReference type="ChEBI" id="CHEBI:140347"/>
        <dbReference type="EC" id="3.5.2.6"/>
    </reaction>
</comment>
<comment type="subcellular location">
    <subcellularLocation>
        <location evidence="1">Periplasm</location>
    </subcellularLocation>
</comment>
<comment type="miscellaneous">
    <text evidence="4">The class C beta-lactamase family has a specific amino-acid numbering system known as SANC, for structural alignment-based numbering of class C beta-lactamases, or else the simpler name structural position. A multiple sequence alignment was used to derive a consensus sequence and then the consensus was numbered taking into account insertions and deletions. This allows use of identical numbers, e.g. for active site residues, despite differences in protein length. UniProt always uses natural numbering of residues, hence there appear to be differences in numbering between this entry and some papers.</text>
</comment>
<comment type="similarity">
    <text evidence="3">Belongs to the class-C beta-lactamase family.</text>
</comment>
<feature type="signal peptide" evidence="1">
    <location>
        <begin position="1"/>
        <end position="20"/>
    </location>
</feature>
<feature type="chain" id="PRO_0000016960" description="Beta-lactamase">
    <location>
        <begin position="21"/>
        <end position="385"/>
    </location>
</feature>
<feature type="active site" description="Acyl-ester intermediate" evidence="2">
    <location>
        <position position="84"/>
    </location>
</feature>
<feature type="active site" description="Proton acceptor" evidence="1">
    <location>
        <position position="170"/>
    </location>
</feature>
<feature type="binding site" evidence="1">
    <location>
        <begin position="335"/>
        <end position="337"/>
    </location>
    <ligand>
        <name>substrate</name>
    </ligand>
</feature>
<evidence type="ECO:0000250" key="1"/>
<evidence type="ECO:0000255" key="2">
    <source>
        <dbReference type="PROSITE-ProRule" id="PRU10102"/>
    </source>
</evidence>
<evidence type="ECO:0000305" key="3"/>
<evidence type="ECO:0000305" key="4">
    <source>
    </source>
</evidence>
<keyword id="KW-0046">Antibiotic resistance</keyword>
<keyword id="KW-0378">Hydrolase</keyword>
<keyword id="KW-0574">Periplasm</keyword>
<keyword id="KW-0732">Signal</keyword>
<proteinExistence type="inferred from homology"/>
<reference key="1">
    <citation type="journal article" date="1996" name="Appl. Microbiol. Biotechnol.">
        <title>Molecular analysis of the gene cluster involved in cephalosporin biosynthesis from Lysobacter lactamgenus YK90.</title>
        <authorList>
            <person name="Kimura H."/>
            <person name="Izawa M."/>
            <person name="Sumino Y."/>
        </authorList>
    </citation>
    <scope>NUCLEOTIDE SEQUENCE [GENOMIC DNA]</scope>
    <source>
        <strain>YK-90</strain>
    </source>
</reference>
<reference key="2">
    <citation type="journal article" date="2020" name="Antimicrob. Agents Chemother.">
        <title>A Standard Numbering Scheme for Class C beta-Lactamases.</title>
        <authorList>
            <person name="Mack A.R."/>
            <person name="Barnes M.D."/>
            <person name="Taracila M.A."/>
            <person name="Hujer A.M."/>
            <person name="Hujer K.M."/>
            <person name="Cabot G."/>
            <person name="Feldgarden M."/>
            <person name="Haft D.H."/>
            <person name="Klimke W."/>
            <person name="van den Akker F."/>
            <person name="Vila A.J."/>
            <person name="Smania A."/>
            <person name="Haider S."/>
            <person name="Papp-Wallace K.M."/>
            <person name="Bradford P.A."/>
            <person name="Rossolini G.M."/>
            <person name="Docquier J.D."/>
            <person name="Frere J.M."/>
            <person name="Galleni M."/>
            <person name="Hanson N.D."/>
            <person name="Oliver A."/>
            <person name="Plesiat P."/>
            <person name="Poirel L."/>
            <person name="Nordmann P."/>
            <person name="Palzkill T.G."/>
            <person name="Jacoby G.A."/>
            <person name="Bush K."/>
            <person name="Bonomo R.A."/>
        </authorList>
    </citation>
    <scope>AMINO ACID NUMBERING SCHEME</scope>
</reference>